<accession>O67258</accession>
<feature type="chain" id="PRO_0000152595" description="Lysine--tRNA ligase">
    <location>
        <begin position="1"/>
        <end position="597"/>
    </location>
</feature>
<feature type="binding site" evidence="1">
    <location>
        <position position="501"/>
    </location>
    <ligand>
        <name>Mg(2+)</name>
        <dbReference type="ChEBI" id="CHEBI:18420"/>
        <label>1</label>
    </ligand>
</feature>
<feature type="binding site" evidence="1">
    <location>
        <position position="508"/>
    </location>
    <ligand>
        <name>Mg(2+)</name>
        <dbReference type="ChEBI" id="CHEBI:18420"/>
        <label>1</label>
    </ligand>
</feature>
<feature type="binding site" evidence="1">
    <location>
        <position position="508"/>
    </location>
    <ligand>
        <name>Mg(2+)</name>
        <dbReference type="ChEBI" id="CHEBI:18420"/>
        <label>2</label>
    </ligand>
</feature>
<protein>
    <recommendedName>
        <fullName>Lysine--tRNA ligase</fullName>
        <ecNumber>6.1.1.6</ecNumber>
    </recommendedName>
    <alternativeName>
        <fullName>Lysyl-tRNA synthetase</fullName>
        <shortName>LysRS</shortName>
    </alternativeName>
</protein>
<evidence type="ECO:0000250" key="1"/>
<evidence type="ECO:0000305" key="2"/>
<reference key="1">
    <citation type="journal article" date="1998" name="Nature">
        <title>The complete genome of the hyperthermophilic bacterium Aquifex aeolicus.</title>
        <authorList>
            <person name="Deckert G."/>
            <person name="Warren P.V."/>
            <person name="Gaasterland T."/>
            <person name="Young W.G."/>
            <person name="Lenox A.L."/>
            <person name="Graham D.E."/>
            <person name="Overbeek R."/>
            <person name="Snead M.A."/>
            <person name="Keller M."/>
            <person name="Aujay M."/>
            <person name="Huber R."/>
            <person name="Feldman R.A."/>
            <person name="Short J.M."/>
            <person name="Olsen G.J."/>
            <person name="Swanson R.V."/>
        </authorList>
    </citation>
    <scope>NUCLEOTIDE SEQUENCE [LARGE SCALE GENOMIC DNA]</scope>
    <source>
        <strain>VF5</strain>
    </source>
</reference>
<comment type="catalytic activity">
    <reaction>
        <text>tRNA(Lys) + L-lysine + ATP = L-lysyl-tRNA(Lys) + AMP + diphosphate</text>
        <dbReference type="Rhea" id="RHEA:20792"/>
        <dbReference type="Rhea" id="RHEA-COMP:9696"/>
        <dbReference type="Rhea" id="RHEA-COMP:9697"/>
        <dbReference type="ChEBI" id="CHEBI:30616"/>
        <dbReference type="ChEBI" id="CHEBI:32551"/>
        <dbReference type="ChEBI" id="CHEBI:33019"/>
        <dbReference type="ChEBI" id="CHEBI:78442"/>
        <dbReference type="ChEBI" id="CHEBI:78529"/>
        <dbReference type="ChEBI" id="CHEBI:456215"/>
        <dbReference type="EC" id="6.1.1.6"/>
    </reaction>
</comment>
<comment type="cofactor">
    <cofactor evidence="1">
        <name>Mg(2+)</name>
        <dbReference type="ChEBI" id="CHEBI:18420"/>
    </cofactor>
    <text evidence="1">Binds 3 Mg(2+) ions per subunit.</text>
</comment>
<comment type="subunit">
    <text evidence="1">Homodimer.</text>
</comment>
<comment type="subcellular location">
    <subcellularLocation>
        <location evidence="1">Cytoplasm</location>
    </subcellularLocation>
</comment>
<comment type="similarity">
    <text evidence="2">Belongs to the class-II aminoacyl-tRNA synthetase family.</text>
</comment>
<gene>
    <name type="primary">lysS</name>
    <name type="ordered locus">aq_1202</name>
</gene>
<organism>
    <name type="scientific">Aquifex aeolicus (strain VF5)</name>
    <dbReference type="NCBI Taxonomy" id="224324"/>
    <lineage>
        <taxon>Bacteria</taxon>
        <taxon>Pseudomonadati</taxon>
        <taxon>Aquificota</taxon>
        <taxon>Aquificia</taxon>
        <taxon>Aquificales</taxon>
        <taxon>Aquificaceae</taxon>
        <taxon>Aquifex</taxon>
    </lineage>
</organism>
<dbReference type="EC" id="6.1.1.6"/>
<dbReference type="EMBL" id="AE000657">
    <property type="protein sequence ID" value="AAC07218.1"/>
    <property type="molecule type" value="Genomic_DNA"/>
</dbReference>
<dbReference type="PIR" id="G70403">
    <property type="entry name" value="G70403"/>
</dbReference>
<dbReference type="RefSeq" id="NP_213822.1">
    <property type="nucleotide sequence ID" value="NC_000918.1"/>
</dbReference>
<dbReference type="SMR" id="O67258"/>
<dbReference type="FunCoup" id="O67258">
    <property type="interactions" value="511"/>
</dbReference>
<dbReference type="STRING" id="224324.aq_1202"/>
<dbReference type="EnsemblBacteria" id="AAC07218">
    <property type="protein sequence ID" value="AAC07218"/>
    <property type="gene ID" value="aq_1202"/>
</dbReference>
<dbReference type="KEGG" id="aae:aq_1202"/>
<dbReference type="PATRIC" id="fig|224324.8.peg.936"/>
<dbReference type="eggNOG" id="COG1190">
    <property type="taxonomic scope" value="Bacteria"/>
</dbReference>
<dbReference type="HOGENOM" id="CLU_008255_6_2_0"/>
<dbReference type="InParanoid" id="O67258"/>
<dbReference type="OrthoDB" id="9802326at2"/>
<dbReference type="Proteomes" id="UP000000798">
    <property type="component" value="Chromosome"/>
</dbReference>
<dbReference type="GO" id="GO:0005737">
    <property type="term" value="C:cytoplasm"/>
    <property type="evidence" value="ECO:0000318"/>
    <property type="project" value="GO_Central"/>
</dbReference>
<dbReference type="GO" id="GO:0005829">
    <property type="term" value="C:cytosol"/>
    <property type="evidence" value="ECO:0000318"/>
    <property type="project" value="GO_Central"/>
</dbReference>
<dbReference type="GO" id="GO:0005524">
    <property type="term" value="F:ATP binding"/>
    <property type="evidence" value="ECO:0007669"/>
    <property type="project" value="UniProtKB-UniRule"/>
</dbReference>
<dbReference type="GO" id="GO:0004824">
    <property type="term" value="F:lysine-tRNA ligase activity"/>
    <property type="evidence" value="ECO:0000318"/>
    <property type="project" value="GO_Central"/>
</dbReference>
<dbReference type="GO" id="GO:0000287">
    <property type="term" value="F:magnesium ion binding"/>
    <property type="evidence" value="ECO:0007669"/>
    <property type="project" value="UniProtKB-UniRule"/>
</dbReference>
<dbReference type="GO" id="GO:0000049">
    <property type="term" value="F:tRNA binding"/>
    <property type="evidence" value="ECO:0000318"/>
    <property type="project" value="GO_Central"/>
</dbReference>
<dbReference type="GO" id="GO:0006430">
    <property type="term" value="P:lysyl-tRNA aminoacylation"/>
    <property type="evidence" value="ECO:0000318"/>
    <property type="project" value="GO_Central"/>
</dbReference>
<dbReference type="CDD" id="cd00775">
    <property type="entry name" value="LysRS_core"/>
    <property type="match status" value="1"/>
</dbReference>
<dbReference type="CDD" id="cd04322">
    <property type="entry name" value="LysRS_N"/>
    <property type="match status" value="1"/>
</dbReference>
<dbReference type="FunFam" id="3.30.930.10:FF:000238">
    <property type="entry name" value="Lysine--tRNA ligase"/>
    <property type="match status" value="1"/>
</dbReference>
<dbReference type="Gene3D" id="3.30.930.10">
    <property type="entry name" value="Bira Bifunctional Protein, Domain 2"/>
    <property type="match status" value="1"/>
</dbReference>
<dbReference type="Gene3D" id="2.40.50.140">
    <property type="entry name" value="Nucleic acid-binding proteins"/>
    <property type="match status" value="2"/>
</dbReference>
<dbReference type="HAMAP" id="MF_00252">
    <property type="entry name" value="Lys_tRNA_synth_class2"/>
    <property type="match status" value="1"/>
</dbReference>
<dbReference type="InterPro" id="IPR004364">
    <property type="entry name" value="Aa-tRNA-synt_II"/>
</dbReference>
<dbReference type="InterPro" id="IPR006195">
    <property type="entry name" value="aa-tRNA-synth_II"/>
</dbReference>
<dbReference type="InterPro" id="IPR045864">
    <property type="entry name" value="aa-tRNA-synth_II/BPL/LPL"/>
</dbReference>
<dbReference type="InterPro" id="IPR002313">
    <property type="entry name" value="Lys-tRNA-ligase_II"/>
</dbReference>
<dbReference type="InterPro" id="IPR034762">
    <property type="entry name" value="Lys-tRNA-ligase_II_bac/euk"/>
</dbReference>
<dbReference type="InterPro" id="IPR044136">
    <property type="entry name" value="Lys-tRNA-ligase_II_N"/>
</dbReference>
<dbReference type="InterPro" id="IPR018149">
    <property type="entry name" value="Lys-tRNA-synth_II_C"/>
</dbReference>
<dbReference type="InterPro" id="IPR012340">
    <property type="entry name" value="NA-bd_OB-fold"/>
</dbReference>
<dbReference type="InterPro" id="IPR004365">
    <property type="entry name" value="NA-bd_OB_tRNA"/>
</dbReference>
<dbReference type="NCBIfam" id="TIGR00499">
    <property type="entry name" value="lysS_bact"/>
    <property type="match status" value="1"/>
</dbReference>
<dbReference type="NCBIfam" id="NF001756">
    <property type="entry name" value="PRK00484.1"/>
    <property type="match status" value="1"/>
</dbReference>
<dbReference type="PANTHER" id="PTHR42918:SF15">
    <property type="entry name" value="LYSINE--TRNA LIGASE, CHLOROPLASTIC_MITOCHONDRIAL"/>
    <property type="match status" value="1"/>
</dbReference>
<dbReference type="PANTHER" id="PTHR42918">
    <property type="entry name" value="LYSYL-TRNA SYNTHETASE"/>
    <property type="match status" value="1"/>
</dbReference>
<dbReference type="Pfam" id="PF00152">
    <property type="entry name" value="tRNA-synt_2"/>
    <property type="match status" value="1"/>
</dbReference>
<dbReference type="Pfam" id="PF01336">
    <property type="entry name" value="tRNA_anti-codon"/>
    <property type="match status" value="1"/>
</dbReference>
<dbReference type="PIRSF" id="PIRSF039101">
    <property type="entry name" value="LysRS2"/>
    <property type="match status" value="1"/>
</dbReference>
<dbReference type="PRINTS" id="PR00982">
    <property type="entry name" value="TRNASYNTHLYS"/>
</dbReference>
<dbReference type="SUPFAM" id="SSF55681">
    <property type="entry name" value="Class II aaRS and biotin synthetases"/>
    <property type="match status" value="1"/>
</dbReference>
<dbReference type="SUPFAM" id="SSF50249">
    <property type="entry name" value="Nucleic acid-binding proteins"/>
    <property type="match status" value="2"/>
</dbReference>
<dbReference type="PROSITE" id="PS50862">
    <property type="entry name" value="AA_TRNA_LIGASE_II"/>
    <property type="match status" value="1"/>
</dbReference>
<proteinExistence type="inferred from homology"/>
<name>SYK_AQUAE</name>
<keyword id="KW-0030">Aminoacyl-tRNA synthetase</keyword>
<keyword id="KW-0067">ATP-binding</keyword>
<keyword id="KW-0963">Cytoplasm</keyword>
<keyword id="KW-0436">Ligase</keyword>
<keyword id="KW-0460">Magnesium</keyword>
<keyword id="KW-0479">Metal-binding</keyword>
<keyword id="KW-0547">Nucleotide-binding</keyword>
<keyword id="KW-0648">Protein biosynthesis</keyword>
<keyword id="KW-1185">Reference proteome</keyword>
<sequence>MLSLLSSEIFFSAIQYNLSLMEEVRLKKLQELREKGINPYPYRFEVTDFIGNIRKQYEEEPPENYKVRVKGVAKRVSRTENGYMVRLADEKGIEILVFTKEEGLKPKESYTFEGILKRVEGKLSLVEAVLTEEEGEEVYKIKEQFDYDPNFRPVSLAGRLVSMRSMGKAIFGHIQDLTGKIQIYLKKDVIGEEKLKFFNDYIDVGDIVGVRGKLFRTNTGELTVEVEEYQLLAKSLHPLPEKWHGLKDVEVRYRQRYLDLIANPEARRIFMLRTKLITEMRKFFEMHGFIEVETPILQPIASGANARPFVTYHNFLETELYLRIAPELYLKRLIVGGFPRVYEIGKNFRNESVDRTHNPEFTMVEFYAAYWDYHDLIKFTEDMFVYLLEKTLGTLKVKYGEWELDFSPPFKKVRYFDLLKEKTGKDKDFFLKDLEGLRKLAKELEIPDVERMTHAKLLDKVFEKVAEEDLIQPTFVIDFPKILSPLAKTHREDPDLVERFELIIARYEVANAYTELNDPFDQKERFLEQLKEKQMGDEEAMDMDEDFIRALEYGMPPTAGEGIGIDRLVMILANTDSIREVILFPQLKPEKKKKEAP</sequence>